<reference key="1">
    <citation type="journal article" date="2004" name="Nat. Genet.">
        <title>Complete sequencing and characterization of 21,243 full-length human cDNAs.</title>
        <authorList>
            <person name="Ota T."/>
            <person name="Suzuki Y."/>
            <person name="Nishikawa T."/>
            <person name="Otsuki T."/>
            <person name="Sugiyama T."/>
            <person name="Irie R."/>
            <person name="Wakamatsu A."/>
            <person name="Hayashi K."/>
            <person name="Sato H."/>
            <person name="Nagai K."/>
            <person name="Kimura K."/>
            <person name="Makita H."/>
            <person name="Sekine M."/>
            <person name="Obayashi M."/>
            <person name="Nishi T."/>
            <person name="Shibahara T."/>
            <person name="Tanaka T."/>
            <person name="Ishii S."/>
            <person name="Yamamoto J."/>
            <person name="Saito K."/>
            <person name="Kawai Y."/>
            <person name="Isono Y."/>
            <person name="Nakamura Y."/>
            <person name="Nagahari K."/>
            <person name="Murakami K."/>
            <person name="Yasuda T."/>
            <person name="Iwayanagi T."/>
            <person name="Wagatsuma M."/>
            <person name="Shiratori A."/>
            <person name="Sudo H."/>
            <person name="Hosoiri T."/>
            <person name="Kaku Y."/>
            <person name="Kodaira H."/>
            <person name="Kondo H."/>
            <person name="Sugawara M."/>
            <person name="Takahashi M."/>
            <person name="Kanda K."/>
            <person name="Yokoi T."/>
            <person name="Furuya T."/>
            <person name="Kikkawa E."/>
            <person name="Omura Y."/>
            <person name="Abe K."/>
            <person name="Kamihara K."/>
            <person name="Katsuta N."/>
            <person name="Sato K."/>
            <person name="Tanikawa M."/>
            <person name="Yamazaki M."/>
            <person name="Ninomiya K."/>
            <person name="Ishibashi T."/>
            <person name="Yamashita H."/>
            <person name="Murakawa K."/>
            <person name="Fujimori K."/>
            <person name="Tanai H."/>
            <person name="Kimata M."/>
            <person name="Watanabe M."/>
            <person name="Hiraoka S."/>
            <person name="Chiba Y."/>
            <person name="Ishida S."/>
            <person name="Ono Y."/>
            <person name="Takiguchi S."/>
            <person name="Watanabe S."/>
            <person name="Yosida M."/>
            <person name="Hotuta T."/>
            <person name="Kusano J."/>
            <person name="Kanehori K."/>
            <person name="Takahashi-Fujii A."/>
            <person name="Hara H."/>
            <person name="Tanase T.-O."/>
            <person name="Nomura Y."/>
            <person name="Togiya S."/>
            <person name="Komai F."/>
            <person name="Hara R."/>
            <person name="Takeuchi K."/>
            <person name="Arita M."/>
            <person name="Imose N."/>
            <person name="Musashino K."/>
            <person name="Yuuki H."/>
            <person name="Oshima A."/>
            <person name="Sasaki N."/>
            <person name="Aotsuka S."/>
            <person name="Yoshikawa Y."/>
            <person name="Matsunawa H."/>
            <person name="Ichihara T."/>
            <person name="Shiohata N."/>
            <person name="Sano S."/>
            <person name="Moriya S."/>
            <person name="Momiyama H."/>
            <person name="Satoh N."/>
            <person name="Takami S."/>
            <person name="Terashima Y."/>
            <person name="Suzuki O."/>
            <person name="Nakagawa S."/>
            <person name="Senoh A."/>
            <person name="Mizoguchi H."/>
            <person name="Goto Y."/>
            <person name="Shimizu F."/>
            <person name="Wakebe H."/>
            <person name="Hishigaki H."/>
            <person name="Watanabe T."/>
            <person name="Sugiyama A."/>
            <person name="Takemoto M."/>
            <person name="Kawakami B."/>
            <person name="Yamazaki M."/>
            <person name="Watanabe K."/>
            <person name="Kumagai A."/>
            <person name="Itakura S."/>
            <person name="Fukuzumi Y."/>
            <person name="Fujimori Y."/>
            <person name="Komiyama M."/>
            <person name="Tashiro H."/>
            <person name="Tanigami A."/>
            <person name="Fujiwara T."/>
            <person name="Ono T."/>
            <person name="Yamada K."/>
            <person name="Fujii Y."/>
            <person name="Ozaki K."/>
            <person name="Hirao M."/>
            <person name="Ohmori Y."/>
            <person name="Kawabata A."/>
            <person name="Hikiji T."/>
            <person name="Kobatake N."/>
            <person name="Inagaki H."/>
            <person name="Ikema Y."/>
            <person name="Okamoto S."/>
            <person name="Okitani R."/>
            <person name="Kawakami T."/>
            <person name="Noguchi S."/>
            <person name="Itoh T."/>
            <person name="Shigeta K."/>
            <person name="Senba T."/>
            <person name="Matsumura K."/>
            <person name="Nakajima Y."/>
            <person name="Mizuno T."/>
            <person name="Morinaga M."/>
            <person name="Sasaki M."/>
            <person name="Togashi T."/>
            <person name="Oyama M."/>
            <person name="Hata H."/>
            <person name="Watanabe M."/>
            <person name="Komatsu T."/>
            <person name="Mizushima-Sugano J."/>
            <person name="Satoh T."/>
            <person name="Shirai Y."/>
            <person name="Takahashi Y."/>
            <person name="Nakagawa K."/>
            <person name="Okumura K."/>
            <person name="Nagase T."/>
            <person name="Nomura N."/>
            <person name="Kikuchi H."/>
            <person name="Masuho Y."/>
            <person name="Yamashita R."/>
            <person name="Nakai K."/>
            <person name="Yada T."/>
            <person name="Nakamura Y."/>
            <person name="Ohara O."/>
            <person name="Isogai T."/>
            <person name="Sugano S."/>
        </authorList>
    </citation>
    <scope>NUCLEOTIDE SEQUENCE [LARGE SCALE MRNA] (ISOFORMS 2 AND 4)</scope>
    <source>
        <tissue>Embryo</tissue>
        <tissue>Neuroepithelioma</tissue>
    </source>
</reference>
<reference key="2">
    <citation type="journal article" date="2007" name="BMC Genomics">
        <title>The full-ORF clone resource of the German cDNA consortium.</title>
        <authorList>
            <person name="Bechtel S."/>
            <person name="Rosenfelder H."/>
            <person name="Duda A."/>
            <person name="Schmidt C.P."/>
            <person name="Ernst U."/>
            <person name="Wellenreuther R."/>
            <person name="Mehrle A."/>
            <person name="Schuster C."/>
            <person name="Bahr A."/>
            <person name="Bloecker H."/>
            <person name="Heubner D."/>
            <person name="Hoerlein A."/>
            <person name="Michel G."/>
            <person name="Wedler H."/>
            <person name="Koehrer K."/>
            <person name="Ottenwaelder B."/>
            <person name="Poustka A."/>
            <person name="Wiemann S."/>
            <person name="Schupp I."/>
        </authorList>
    </citation>
    <scope>NUCLEOTIDE SEQUENCE [LARGE SCALE MRNA] (ISOFORM 1)</scope>
    <source>
        <tissue>Melanoma</tissue>
    </source>
</reference>
<reference key="3">
    <citation type="journal article" date="2006" name="Nature">
        <title>DNA sequence of human chromosome 17 and analysis of rearrangement in the human lineage.</title>
        <authorList>
            <person name="Zody M.C."/>
            <person name="Garber M."/>
            <person name="Adams D.J."/>
            <person name="Sharpe T."/>
            <person name="Harrow J."/>
            <person name="Lupski J.R."/>
            <person name="Nicholson C."/>
            <person name="Searle S.M."/>
            <person name="Wilming L."/>
            <person name="Young S.K."/>
            <person name="Abouelleil A."/>
            <person name="Allen N.R."/>
            <person name="Bi W."/>
            <person name="Bloom T."/>
            <person name="Borowsky M.L."/>
            <person name="Bugalter B.E."/>
            <person name="Butler J."/>
            <person name="Chang J.L."/>
            <person name="Chen C.-K."/>
            <person name="Cook A."/>
            <person name="Corum B."/>
            <person name="Cuomo C.A."/>
            <person name="de Jong P.J."/>
            <person name="DeCaprio D."/>
            <person name="Dewar K."/>
            <person name="FitzGerald M."/>
            <person name="Gilbert J."/>
            <person name="Gibson R."/>
            <person name="Gnerre S."/>
            <person name="Goldstein S."/>
            <person name="Grafham D.V."/>
            <person name="Grocock R."/>
            <person name="Hafez N."/>
            <person name="Hagopian D.S."/>
            <person name="Hart E."/>
            <person name="Norman C.H."/>
            <person name="Humphray S."/>
            <person name="Jaffe D.B."/>
            <person name="Jones M."/>
            <person name="Kamal M."/>
            <person name="Khodiyar V.K."/>
            <person name="LaButti K."/>
            <person name="Laird G."/>
            <person name="Lehoczky J."/>
            <person name="Liu X."/>
            <person name="Lokyitsang T."/>
            <person name="Loveland J."/>
            <person name="Lui A."/>
            <person name="Macdonald P."/>
            <person name="Major J.E."/>
            <person name="Matthews L."/>
            <person name="Mauceli E."/>
            <person name="McCarroll S.A."/>
            <person name="Mihalev A.H."/>
            <person name="Mudge J."/>
            <person name="Nguyen C."/>
            <person name="Nicol R."/>
            <person name="O'Leary S.B."/>
            <person name="Osoegawa K."/>
            <person name="Schwartz D.C."/>
            <person name="Shaw-Smith C."/>
            <person name="Stankiewicz P."/>
            <person name="Steward C."/>
            <person name="Swarbreck D."/>
            <person name="Venkataraman V."/>
            <person name="Whittaker C.A."/>
            <person name="Yang X."/>
            <person name="Zimmer A.R."/>
            <person name="Bradley A."/>
            <person name="Hubbard T."/>
            <person name="Birren B.W."/>
            <person name="Rogers J."/>
            <person name="Lander E.S."/>
            <person name="Nusbaum C."/>
        </authorList>
    </citation>
    <scope>NUCLEOTIDE SEQUENCE [LARGE SCALE GENOMIC DNA]</scope>
</reference>
<reference key="4">
    <citation type="journal article" date="2004" name="Genome Res.">
        <title>The status, quality, and expansion of the NIH full-length cDNA project: the Mammalian Gene Collection (MGC).</title>
        <authorList>
            <consortium name="The MGC Project Team"/>
        </authorList>
    </citation>
    <scope>NUCLEOTIDE SEQUENCE [LARGE SCALE MRNA] (ISOFORM 3)</scope>
    <scope>VARIANT PRO-126</scope>
    <source>
        <tissue>Eye</tissue>
    </source>
</reference>
<reference key="5">
    <citation type="journal article" date="2008" name="Proc. Natl. Acad. Sci. U.S.A.">
        <title>A quantitative atlas of mitotic phosphorylation.</title>
        <authorList>
            <person name="Dephoure N."/>
            <person name="Zhou C."/>
            <person name="Villen J."/>
            <person name="Beausoleil S.A."/>
            <person name="Bakalarski C.E."/>
            <person name="Elledge S.J."/>
            <person name="Gygi S.P."/>
        </authorList>
    </citation>
    <scope>IDENTIFICATION BY MASS SPECTROMETRY [LARGE SCALE ANALYSIS]</scope>
    <source>
        <tissue>Cervix carcinoma</tissue>
    </source>
</reference>
<reference key="6">
    <citation type="journal article" date="2013" name="J. Proteome Res.">
        <title>Toward a comprehensive characterization of a human cancer cell phosphoproteome.</title>
        <authorList>
            <person name="Zhou H."/>
            <person name="Di Palma S."/>
            <person name="Preisinger C."/>
            <person name="Peng M."/>
            <person name="Polat A.N."/>
            <person name="Heck A.J."/>
            <person name="Mohammed S."/>
        </authorList>
    </citation>
    <scope>PHOSPHORYLATION [LARGE SCALE ANALYSIS] AT SER-47</scope>
    <scope>IDENTIFICATION BY MASS SPECTROMETRY [LARGE SCALE ANALYSIS]</scope>
    <source>
        <tissue>Cervix carcinoma</tissue>
        <tissue>Erythroleukemia</tissue>
    </source>
</reference>
<reference key="7">
    <citation type="journal article" date="2014" name="Mol. Cell. Proteomics">
        <title>Immunoaffinity enrichment and mass spectrometry analysis of protein methylation.</title>
        <authorList>
            <person name="Guo A."/>
            <person name="Gu H."/>
            <person name="Zhou J."/>
            <person name="Mulhern D."/>
            <person name="Wang Y."/>
            <person name="Lee K.A."/>
            <person name="Yang V."/>
            <person name="Aguiar M."/>
            <person name="Kornhauser J."/>
            <person name="Jia X."/>
            <person name="Ren J."/>
            <person name="Beausoleil S.A."/>
            <person name="Silva J.C."/>
            <person name="Vemulapalli V."/>
            <person name="Bedford M.T."/>
            <person name="Comb M.J."/>
        </authorList>
    </citation>
    <scope>METHYLATION [LARGE SCALE ANALYSIS] AT ARG-285; ARG-295; ARG-329 AND ARG-337</scope>
    <scope>IDENTIFICATION BY MASS SPECTROMETRY [LARGE SCALE ANALYSIS]</scope>
    <source>
        <tissue>Colon carcinoma</tissue>
    </source>
</reference>
<reference key="8">
    <citation type="journal article" date="2019" name="Genes Dev.">
        <title>Control of homologous recombination by the HROB-MCM8-MCM9 pathway.</title>
        <authorList>
            <person name="Hustedt N."/>
            <person name="Saito Y."/>
            <person name="Zimmermann M."/>
            <person name="Alvarez-Quilon A."/>
            <person name="Setiaputra D."/>
            <person name="Adam S."/>
            <person name="McEwan A."/>
            <person name="Yuan J.Y."/>
            <person name="Olivieri M."/>
            <person name="Zhao Y."/>
            <person name="Kanemaki M.T."/>
            <person name="Jurisicova A."/>
            <person name="Durocher D."/>
        </authorList>
    </citation>
    <scope>FUNCTION</scope>
    <scope>SUBCELLULAR LOCATION</scope>
    <scope>INTERACTION WITH MCM8</scope>
</reference>
<reference key="9">
    <citation type="journal article" date="2022" name="Eur. J. Hum. Genet.">
        <title>Meiotic genes in premature ovarian insufficiency: variants in HROB and REC8 as likely genetic causes.</title>
        <authorList>
            <person name="Tucker E.J."/>
            <person name="Bell K.M."/>
            <person name="Robevska G."/>
            <person name="van den Bergen J."/>
            <person name="Ayers K.L."/>
            <person name="Listyasari N."/>
            <person name="Faradz S.M."/>
            <person name="Dulon J."/>
            <person name="Bakhshalizadeh S."/>
            <person name="Sreenivasan R."/>
            <person name="Nouyou B."/>
            <person name="Carre W."/>
            <person name="Akloul L."/>
            <person name="Duros S."/>
            <person name="Domin-Bernhard M."/>
            <person name="Belaud-Rotureau M.A."/>
            <person name="Touraine P."/>
            <person name="Jaillard S."/>
            <person name="Sinclair A.H."/>
        </authorList>
    </citation>
    <scope>INVOLVEMENT IN ODG11</scope>
</reference>
<reference key="10">
    <citation type="journal article" date="2023" name="Zhejiang Da Xue Xue Bao Yi Xue Ban">
        <title>Genetic analysis of novel pathogenic gene HROB in a family with primary ovarian insufficiency.</title>
        <authorList>
            <person name="Wu X."/>
            <person name="Peng X."/>
            <person name="Zheng Y."/>
            <person name="Zhang S."/>
            <person name="Peng Y."/>
            <person name="Wang H."/>
        </authorList>
    </citation>
    <scope>VARIANTS ODG11 240-ARG--SER-647 DEL AND 451-ARG--SER-647 DEL</scope>
    <scope>INVOLVEMENT IN ODG11</scope>
</reference>
<feature type="chain" id="PRO_0000288092" description="Homologous recombination OB-fold protein">
    <location>
        <begin position="1"/>
        <end position="647"/>
    </location>
</feature>
<feature type="region of interest" description="Disordered" evidence="2">
    <location>
        <begin position="284"/>
        <end position="361"/>
    </location>
</feature>
<feature type="region of interest" description="Disordered" evidence="2">
    <location>
        <begin position="380"/>
        <end position="399"/>
    </location>
</feature>
<feature type="region of interest" description="Disordered" evidence="2">
    <location>
        <begin position="581"/>
        <end position="631"/>
    </location>
</feature>
<feature type="compositionally biased region" description="Polar residues" evidence="2">
    <location>
        <begin position="287"/>
        <end position="308"/>
    </location>
</feature>
<feature type="compositionally biased region" description="Low complexity" evidence="2">
    <location>
        <begin position="319"/>
        <end position="332"/>
    </location>
</feature>
<feature type="compositionally biased region" description="Polar residues" evidence="2">
    <location>
        <begin position="380"/>
        <end position="390"/>
    </location>
</feature>
<feature type="compositionally biased region" description="Acidic residues" evidence="2">
    <location>
        <begin position="618"/>
        <end position="631"/>
    </location>
</feature>
<feature type="modified residue" description="Phosphoserine" evidence="11">
    <location>
        <position position="47"/>
    </location>
</feature>
<feature type="modified residue" description="Asymmetric dimethylarginine" evidence="12">
    <location>
        <position position="285"/>
    </location>
</feature>
<feature type="modified residue" description="Asymmetric dimethylarginine" evidence="12">
    <location>
        <position position="295"/>
    </location>
</feature>
<feature type="modified residue" description="Asymmetric dimethylarginine" evidence="12">
    <location>
        <position position="329"/>
    </location>
</feature>
<feature type="modified residue" description="Asymmetric dimethylarginine" evidence="12">
    <location>
        <position position="337"/>
    </location>
</feature>
<feature type="splice variant" id="VSP_025651" description="In isoform 2." evidence="7">
    <original>SSWIGNQRRVTVTEVLRETARPQSSALHPL</original>
    <variation>NCLNSSHSATPLGSLSATLHCSSTSASPSC</variation>
    <location>
        <begin position="108"/>
        <end position="137"/>
    </location>
</feature>
<feature type="splice variant" id="VSP_025652" description="In isoform 2." evidence="7">
    <location>
        <begin position="138"/>
        <end position="647"/>
    </location>
</feature>
<feature type="splice variant" id="VSP_025653" description="In isoform 3." evidence="8">
    <location>
        <begin position="409"/>
        <end position="484"/>
    </location>
</feature>
<feature type="splice variant" id="VSP_047077" description="In isoform 4." evidence="7">
    <location>
        <position position="484"/>
    </location>
</feature>
<feature type="splice variant" id="VSP_025654" description="In isoform 3." evidence="8">
    <original>DSGSFQ</original>
    <variation>MTWMDS</variation>
    <location>
        <begin position="592"/>
        <end position="597"/>
    </location>
</feature>
<feature type="splice variant" id="VSP_025655" description="In isoform 3." evidence="8">
    <location>
        <begin position="598"/>
        <end position="647"/>
    </location>
</feature>
<feature type="sequence variant" id="VAR_032393" description="In dbSNP:rs227584." evidence="3">
    <original>T</original>
    <variation>P</variation>
    <location>
        <position position="126"/>
    </location>
</feature>
<feature type="sequence variant" id="VAR_089839" description="In ODG11; likely pathogenic." evidence="6">
    <location>
        <begin position="240"/>
        <end position="647"/>
    </location>
</feature>
<feature type="sequence variant" id="VAR_089840" description="In ODG11; likely pathogenic." evidence="6">
    <location>
        <begin position="451"/>
        <end position="647"/>
    </location>
</feature>
<accession>Q8N3J3</accession>
<accession>A8K7A9</accession>
<accession>Q9BWM9</accession>
<accession>Q9HAI1</accession>
<sequence length="647" mass="69771">MACSLQKLFAVEEEFEDEDFLSAVEDAENRFTGSLPVNAGRLRPVSSRPQETVQAQSSRLLLLHPTAPSEALGLPDLDLCLPASSTPSADSRPSCIGAAPLRPVSTSSSWIGNQRRVTVTEVLRETARPQSSALHPLLTFESQQQQVGGFEGPEQDEFDKVLASMELEEPGMELECGVSSEAIPILPAQQREGSVLAKKARVVDLSGSCQKGPVPAIHKAGIMSAQDESLDPVIQCRTPRPPLRPGAVGHLPVPTALTVPTQQLHWEVCPQRSPVQALQPLQAARGTIQSSPQNRFPCQPFQSPSSWLSGKAHLPRPRTPNSSCSTPSRTSSGLFPRIPLQPQAPVSSIGSPVGTPKGPQGALQTPIVTNHLVQLVTAASRTPQQPTHPSTRAKTRRFPGPAGILPHQQSGRSLEDIMVSAPQTPTHGALAKFQTEIVASSQASVEEDFGRGPWLTMKSTLGLDERDPSCFLCTYSIVMVLRKQAALKQLPRNKVPNMAVMIKSLTRSTMDASVVFKDPTGEMQGTVHRLLLETCQNELKPGSVLLLKQIGVFSPSLRNHYLNVTPNNLVHIYSPDSGDGSFLKPSQPFPKDSGSFQHDVAAKPEEGFRTAQNLEAEASPEEELPEADDLDGLLSELPEDFFCGTSS</sequence>
<keyword id="KW-0025">Alternative splicing</keyword>
<keyword id="KW-0158">Chromosome</keyword>
<keyword id="KW-0225">Disease variant</keyword>
<keyword id="KW-0227">DNA damage</keyword>
<keyword id="KW-0233">DNA recombination</keyword>
<keyword id="KW-0234">DNA repair</keyword>
<keyword id="KW-0237">DNA synthesis</keyword>
<keyword id="KW-0238">DNA-binding</keyword>
<keyword id="KW-0488">Methylation</keyword>
<keyword id="KW-0539">Nucleus</keyword>
<keyword id="KW-0597">Phosphoprotein</keyword>
<keyword id="KW-1267">Proteomics identification</keyword>
<keyword id="KW-1185">Reference proteome</keyword>
<evidence type="ECO:0000250" key="1">
    <source>
        <dbReference type="UniProtKB" id="Q32P12"/>
    </source>
</evidence>
<evidence type="ECO:0000256" key="2">
    <source>
        <dbReference type="SAM" id="MobiDB-lite"/>
    </source>
</evidence>
<evidence type="ECO:0000269" key="3">
    <source>
    </source>
</evidence>
<evidence type="ECO:0000269" key="4">
    <source>
    </source>
</evidence>
<evidence type="ECO:0000269" key="5">
    <source>
    </source>
</evidence>
<evidence type="ECO:0000269" key="6">
    <source>
    </source>
</evidence>
<evidence type="ECO:0000303" key="7">
    <source>
    </source>
</evidence>
<evidence type="ECO:0000303" key="8">
    <source>
    </source>
</evidence>
<evidence type="ECO:0000303" key="9">
    <source>
    </source>
</evidence>
<evidence type="ECO:0000312" key="10">
    <source>
        <dbReference type="HGNC" id="HGNC:28460"/>
    </source>
</evidence>
<evidence type="ECO:0007744" key="11">
    <source>
    </source>
</evidence>
<evidence type="ECO:0007744" key="12">
    <source>
    </source>
</evidence>
<gene>
    <name evidence="10" type="primary">HROB</name>
    <name type="synonym">C17orf53</name>
</gene>
<protein>
    <recommendedName>
        <fullName evidence="9">Homologous recombination OB-fold protein</fullName>
    </recommendedName>
</protein>
<dbReference type="EMBL" id="AK291924">
    <property type="protein sequence ID" value="BAF84613.1"/>
    <property type="molecule type" value="mRNA"/>
</dbReference>
<dbReference type="EMBL" id="AK021656">
    <property type="protein sequence ID" value="BAB13867.1"/>
    <property type="molecule type" value="mRNA"/>
</dbReference>
<dbReference type="EMBL" id="AL834295">
    <property type="protein sequence ID" value="CAD38968.1"/>
    <property type="molecule type" value="mRNA"/>
</dbReference>
<dbReference type="EMBL" id="AC004596">
    <property type="status" value="NOT_ANNOTATED_CDS"/>
    <property type="molecule type" value="Genomic_DNA"/>
</dbReference>
<dbReference type="EMBL" id="BC000121">
    <property type="protein sequence ID" value="AAH00121.1"/>
    <property type="molecule type" value="mRNA"/>
</dbReference>
<dbReference type="CCDS" id="CCDS11477.1">
    <molecule id="Q8N3J3-1"/>
</dbReference>
<dbReference type="CCDS" id="CCDS59293.1">
    <molecule id="Q8N3J3-4"/>
</dbReference>
<dbReference type="CCDS" id="CCDS82136.1">
    <molecule id="Q8N3J3-3"/>
</dbReference>
<dbReference type="RefSeq" id="NP_001164722.1">
    <molecule id="Q8N3J3-4"/>
    <property type="nucleotide sequence ID" value="NM_001171251.3"/>
</dbReference>
<dbReference type="RefSeq" id="NP_001308239.1">
    <molecule id="Q8N3J3-3"/>
    <property type="nucleotide sequence ID" value="NM_001321310.2"/>
</dbReference>
<dbReference type="RefSeq" id="NP_001308240.1">
    <property type="nucleotide sequence ID" value="NM_001321311.1"/>
</dbReference>
<dbReference type="RefSeq" id="NP_076937.2">
    <molecule id="Q8N3J3-1"/>
    <property type="nucleotide sequence ID" value="NM_024032.4"/>
</dbReference>
<dbReference type="BioGRID" id="122466">
    <property type="interactions" value="44"/>
</dbReference>
<dbReference type="FunCoup" id="Q8N3J3">
    <property type="interactions" value="225"/>
</dbReference>
<dbReference type="IntAct" id="Q8N3J3">
    <property type="interactions" value="13"/>
</dbReference>
<dbReference type="MINT" id="Q8N3J3"/>
<dbReference type="STRING" id="9606.ENSP00000313500"/>
<dbReference type="GlyGen" id="Q8N3J3">
    <property type="glycosylation" value="4 sites, 1 N-linked glycan (1 site), 1 O-linked glycan (1 site)"/>
</dbReference>
<dbReference type="iPTMnet" id="Q8N3J3"/>
<dbReference type="PhosphoSitePlus" id="Q8N3J3"/>
<dbReference type="BioMuta" id="C17orf53"/>
<dbReference type="DMDM" id="74714855"/>
<dbReference type="jPOST" id="Q8N3J3"/>
<dbReference type="MassIVE" id="Q8N3J3"/>
<dbReference type="PaxDb" id="9606-ENSP00000313500"/>
<dbReference type="PeptideAtlas" id="Q8N3J3"/>
<dbReference type="ProteomicsDB" id="71808">
    <molecule id="Q8N3J3-1"/>
</dbReference>
<dbReference type="ProteomicsDB" id="71809">
    <molecule id="Q8N3J3-2"/>
</dbReference>
<dbReference type="ProteomicsDB" id="71810">
    <molecule id="Q8N3J3-3"/>
</dbReference>
<dbReference type="Pumba" id="Q8N3J3"/>
<dbReference type="Antibodypedia" id="17380">
    <property type="antibodies" value="202 antibodies from 19 providers"/>
</dbReference>
<dbReference type="DNASU" id="78995"/>
<dbReference type="Ensembl" id="ENST00000245382.6">
    <molecule id="Q8N3J3-3"/>
    <property type="protein sequence ID" value="ENSP00000245382.5"/>
    <property type="gene ID" value="ENSG00000125319.15"/>
</dbReference>
<dbReference type="Ensembl" id="ENST00000319977.8">
    <molecule id="Q8N3J3-1"/>
    <property type="protein sequence ID" value="ENSP00000313500.4"/>
    <property type="gene ID" value="ENSG00000125319.15"/>
</dbReference>
<dbReference type="Ensembl" id="ENST00000585683.6">
    <molecule id="Q8N3J3-4"/>
    <property type="protein sequence ID" value="ENSP00000466618.1"/>
    <property type="gene ID" value="ENSG00000125319.15"/>
</dbReference>
<dbReference type="GeneID" id="78995"/>
<dbReference type="KEGG" id="hsa:78995"/>
<dbReference type="MANE-Select" id="ENST00000585683.6">
    <molecule id="Q8N3J3-4"/>
    <property type="protein sequence ID" value="ENSP00000466618.1"/>
    <property type="RefSeq nucleotide sequence ID" value="NM_001171251.3"/>
    <property type="RefSeq protein sequence ID" value="NP_001164722.1"/>
</dbReference>
<dbReference type="UCSC" id="uc002ifi.2">
    <molecule id="Q8N3J3-1"/>
    <property type="organism name" value="human"/>
</dbReference>
<dbReference type="AGR" id="HGNC:28460"/>
<dbReference type="CTD" id="78995"/>
<dbReference type="DisGeNET" id="78995"/>
<dbReference type="GeneCards" id="HROB"/>
<dbReference type="HGNC" id="HGNC:28460">
    <property type="gene designation" value="HROB"/>
</dbReference>
<dbReference type="HPA" id="ENSG00000125319">
    <property type="expression patterns" value="Tissue enhanced (bone marrow, testis)"/>
</dbReference>
<dbReference type="MalaCards" id="HROB"/>
<dbReference type="MIM" id="618611">
    <property type="type" value="gene"/>
</dbReference>
<dbReference type="MIM" id="620897">
    <property type="type" value="phenotype"/>
</dbReference>
<dbReference type="neXtProt" id="NX_Q8N3J3"/>
<dbReference type="OpenTargets" id="ENSG00000125319"/>
<dbReference type="VEuPathDB" id="HostDB:ENSG00000125319"/>
<dbReference type="eggNOG" id="ENOG502QV5E">
    <property type="taxonomic scope" value="Eukaryota"/>
</dbReference>
<dbReference type="GeneTree" id="ENSGT00400000022305"/>
<dbReference type="HOGENOM" id="CLU_028006_0_0_1"/>
<dbReference type="InParanoid" id="Q8N3J3"/>
<dbReference type="OMA" id="FFCGTSN"/>
<dbReference type="OrthoDB" id="21443at2759"/>
<dbReference type="PAN-GO" id="Q8N3J3">
    <property type="GO annotations" value="0 GO annotations based on evolutionary models"/>
</dbReference>
<dbReference type="PhylomeDB" id="Q8N3J3"/>
<dbReference type="TreeFam" id="TF331108"/>
<dbReference type="PathwayCommons" id="Q8N3J3"/>
<dbReference type="SignaLink" id="Q8N3J3"/>
<dbReference type="BioGRID-ORCS" id="78995">
    <property type="hits" value="56 hits in 1128 CRISPR screens"/>
</dbReference>
<dbReference type="ChiTaRS" id="C17orf53">
    <property type="organism name" value="human"/>
</dbReference>
<dbReference type="GenomeRNAi" id="78995"/>
<dbReference type="Pharos" id="Q8N3J3">
    <property type="development level" value="Tbio"/>
</dbReference>
<dbReference type="PRO" id="PR:Q8N3J3"/>
<dbReference type="Proteomes" id="UP000005640">
    <property type="component" value="Chromosome 17"/>
</dbReference>
<dbReference type="RNAct" id="Q8N3J3">
    <property type="molecule type" value="protein"/>
</dbReference>
<dbReference type="Bgee" id="ENSG00000125319">
    <property type="expression patterns" value="Expressed in male germ line stem cell (sensu Vertebrata) in testis and 130 other cell types or tissues"/>
</dbReference>
<dbReference type="GO" id="GO:0005634">
    <property type="term" value="C:nucleus"/>
    <property type="evidence" value="ECO:0007669"/>
    <property type="project" value="UniProtKB-SubCell"/>
</dbReference>
<dbReference type="GO" id="GO:0090734">
    <property type="term" value="C:site of DNA damage"/>
    <property type="evidence" value="ECO:0000315"/>
    <property type="project" value="UniProtKB"/>
</dbReference>
<dbReference type="GO" id="GO:0003697">
    <property type="term" value="F:single-stranded DNA binding"/>
    <property type="evidence" value="ECO:0000250"/>
    <property type="project" value="UniProtKB"/>
</dbReference>
<dbReference type="GO" id="GO:0006974">
    <property type="term" value="P:DNA damage response"/>
    <property type="evidence" value="ECO:0000315"/>
    <property type="project" value="UniProtKB"/>
</dbReference>
<dbReference type="GO" id="GO:0000731">
    <property type="term" value="P:DNA synthesis involved in DNA repair"/>
    <property type="evidence" value="ECO:0000315"/>
    <property type="project" value="UniProtKB"/>
</dbReference>
<dbReference type="GO" id="GO:0007292">
    <property type="term" value="P:female gamete generation"/>
    <property type="evidence" value="ECO:0000250"/>
    <property type="project" value="UniProtKB"/>
</dbReference>
<dbReference type="GO" id="GO:0036297">
    <property type="term" value="P:interstrand cross-link repair"/>
    <property type="evidence" value="ECO:0000315"/>
    <property type="project" value="UniProtKB"/>
</dbReference>
<dbReference type="GO" id="GO:0048232">
    <property type="term" value="P:male gamete generation"/>
    <property type="evidence" value="ECO:0000250"/>
    <property type="project" value="UniProtKB"/>
</dbReference>
<dbReference type="GO" id="GO:0000725">
    <property type="term" value="P:recombinational repair"/>
    <property type="evidence" value="ECO:0007669"/>
    <property type="project" value="InterPro"/>
</dbReference>
<dbReference type="InterPro" id="IPR028045">
    <property type="entry name" value="HROB"/>
</dbReference>
<dbReference type="PANTHER" id="PTHR14523:SF1">
    <property type="entry name" value="HOMOLOGOUS RECOMBINATION OB-FOLD PROTEIN"/>
    <property type="match status" value="1"/>
</dbReference>
<dbReference type="PANTHER" id="PTHR14523">
    <property type="entry name" value="UNCHARACTERIZED PROTEIN C17ORF53 HOMOLOG"/>
    <property type="match status" value="1"/>
</dbReference>
<dbReference type="Pfam" id="PF15072">
    <property type="entry name" value="HROB"/>
    <property type="match status" value="1"/>
</dbReference>
<name>HROB_HUMAN</name>
<comment type="function">
    <text evidence="4">DNA-binding protein involved in homologous recombination that acts by recruiting the MCM8-MCM9 helicase complex to sites of DNA damage to promote DNA repair synthesis.</text>
</comment>
<comment type="subunit">
    <text evidence="1 4">Interacts with MCM8; this interaction is necessary for MCM8-MCM9 helicase complex recruitment to DNA damage sites (PubMed:31467087). Interacts with RPA1; this interaction associates HROB with the RPA complex (By similarity).</text>
</comment>
<comment type="interaction">
    <interactant intactId="EBI-11061081">
        <id>Q8N3J3-3</id>
    </interactant>
    <interactant intactId="EBI-726739">
        <id>Q9UPY8</id>
        <label>MAPRE3</label>
    </interactant>
    <organismsDiffer>false</organismsDiffer>
    <experiments>3</experiments>
</comment>
<comment type="subcellular location">
    <subcellularLocation>
        <location evidence="4">Nucleus</location>
    </subcellularLocation>
    <subcellularLocation>
        <location evidence="4">Chromosome</location>
    </subcellularLocation>
    <text evidence="4">Localized to the sites of DNA damage.</text>
</comment>
<comment type="alternative products">
    <event type="alternative splicing"/>
    <isoform>
        <id>Q8N3J3-1</id>
        <name>1</name>
        <sequence type="displayed"/>
    </isoform>
    <isoform>
        <id>Q8N3J3-2</id>
        <name>2</name>
        <sequence type="described" ref="VSP_025651 VSP_025652"/>
    </isoform>
    <isoform>
        <id>Q8N3J3-3</id>
        <name>3</name>
        <sequence type="described" ref="VSP_025653 VSP_025654 VSP_025655"/>
    </isoform>
    <isoform>
        <id>Q8N3J3-4</id>
        <name>4</name>
        <sequence type="described" ref="VSP_047077"/>
    </isoform>
</comment>
<comment type="disease" evidence="5 6">
    <disease id="DI-06925">
        <name>Ovarian dysgenesis 11</name>
        <acronym>ODG11</acronym>
        <description>An autosomal recessive form of ovarian dysgenesis, a disorder characterized by lack of spontaneous pubertal development, primary amenorrhea, uterine hypoplasia, and hypergonadotropic hypogonadism as a result of streak gonads.</description>
        <dbReference type="MIM" id="620897"/>
    </disease>
    <text>The disease is caused by variants affecting the gene represented in this entry.</text>
</comment>
<proteinExistence type="evidence at protein level"/>
<organism>
    <name type="scientific">Homo sapiens</name>
    <name type="common">Human</name>
    <dbReference type="NCBI Taxonomy" id="9606"/>
    <lineage>
        <taxon>Eukaryota</taxon>
        <taxon>Metazoa</taxon>
        <taxon>Chordata</taxon>
        <taxon>Craniata</taxon>
        <taxon>Vertebrata</taxon>
        <taxon>Euteleostomi</taxon>
        <taxon>Mammalia</taxon>
        <taxon>Eutheria</taxon>
        <taxon>Euarchontoglires</taxon>
        <taxon>Primates</taxon>
        <taxon>Haplorrhini</taxon>
        <taxon>Catarrhini</taxon>
        <taxon>Hominidae</taxon>
        <taxon>Homo</taxon>
    </lineage>
</organism>